<feature type="chain" id="PRO_0000230116" description="Transcriptional regulator MraZ">
    <location>
        <begin position="1"/>
        <end position="152"/>
    </location>
</feature>
<feature type="domain" description="SpoVT-AbrB 1" evidence="2">
    <location>
        <begin position="7"/>
        <end position="54"/>
    </location>
</feature>
<feature type="domain" description="SpoVT-AbrB 2" evidence="2">
    <location>
        <begin position="83"/>
        <end position="126"/>
    </location>
</feature>
<organism>
    <name type="scientific">Hydrogenovibrio crunogenus (strain DSM 25203 / XCL-2)</name>
    <name type="common">Thiomicrospira crunogena</name>
    <dbReference type="NCBI Taxonomy" id="317025"/>
    <lineage>
        <taxon>Bacteria</taxon>
        <taxon>Pseudomonadati</taxon>
        <taxon>Pseudomonadota</taxon>
        <taxon>Gammaproteobacteria</taxon>
        <taxon>Thiotrichales</taxon>
        <taxon>Piscirickettsiaceae</taxon>
        <taxon>Hydrogenovibrio</taxon>
    </lineage>
</organism>
<proteinExistence type="inferred from homology"/>
<keyword id="KW-0963">Cytoplasm</keyword>
<keyword id="KW-0238">DNA-binding</keyword>
<keyword id="KW-0677">Repeat</keyword>
<keyword id="KW-0804">Transcription</keyword>
<keyword id="KW-0805">Transcription regulation</keyword>
<gene>
    <name evidence="1" type="primary">mraZ</name>
    <name type="ordered locus">Tcr_0558</name>
</gene>
<reference key="1">
    <citation type="journal article" date="2006" name="PLoS Biol.">
        <title>The genome of deep-sea vent chemolithoautotroph Thiomicrospira crunogena XCL-2.</title>
        <authorList>
            <person name="Scott K.M."/>
            <person name="Sievert S.M."/>
            <person name="Abril F.N."/>
            <person name="Ball L.A."/>
            <person name="Barrett C.J."/>
            <person name="Blake R.A."/>
            <person name="Boller A.J."/>
            <person name="Chain P.S.G."/>
            <person name="Clark J.A."/>
            <person name="Davis C.R."/>
            <person name="Detter C."/>
            <person name="Do K.F."/>
            <person name="Dobrinski K.P."/>
            <person name="Faza B.I."/>
            <person name="Fitzpatrick K.A."/>
            <person name="Freyermuth S.K."/>
            <person name="Harmer T.L."/>
            <person name="Hauser L.J."/>
            <person name="Huegler M."/>
            <person name="Kerfeld C.A."/>
            <person name="Klotz M.G."/>
            <person name="Kong W.W."/>
            <person name="Land M."/>
            <person name="Lapidus A."/>
            <person name="Larimer F.W."/>
            <person name="Longo D.L."/>
            <person name="Lucas S."/>
            <person name="Malfatti S.A."/>
            <person name="Massey S.E."/>
            <person name="Martin D.D."/>
            <person name="McCuddin Z."/>
            <person name="Meyer F."/>
            <person name="Moore J.L."/>
            <person name="Ocampo L.H. Jr."/>
            <person name="Paul J.H."/>
            <person name="Paulsen I.T."/>
            <person name="Reep D.K."/>
            <person name="Ren Q."/>
            <person name="Ross R.L."/>
            <person name="Sato P.Y."/>
            <person name="Thomas P."/>
            <person name="Tinkham L.E."/>
            <person name="Zeruth G.T."/>
        </authorList>
    </citation>
    <scope>NUCLEOTIDE SEQUENCE [LARGE SCALE GENOMIC DNA]</scope>
    <source>
        <strain>DSM 25203 / XCL-2</strain>
    </source>
</reference>
<sequence>MLFFRGINSINMDAKGRLAIPKRYRESIAEASENQLVATIDLHSPCLLIYTMDEWEVIERKLMSLPNMDPQARLVQRLLLGHASEMEMDGQGRVLLPSLLREHAKLEKEAILLGQGNKFELWSQEAWDASRPEMLDSASVGDVSESLSSLSL</sequence>
<dbReference type="EMBL" id="CP000109">
    <property type="protein sequence ID" value="ABB41154.1"/>
    <property type="status" value="ALT_INIT"/>
    <property type="molecule type" value="Genomic_DNA"/>
</dbReference>
<dbReference type="SMR" id="Q31I69"/>
<dbReference type="STRING" id="317025.Tcr_0558"/>
<dbReference type="KEGG" id="tcx:Tcr_0558"/>
<dbReference type="eggNOG" id="COG2001">
    <property type="taxonomic scope" value="Bacteria"/>
</dbReference>
<dbReference type="HOGENOM" id="CLU_107907_1_0_6"/>
<dbReference type="OrthoDB" id="9807753at2"/>
<dbReference type="GO" id="GO:0005737">
    <property type="term" value="C:cytoplasm"/>
    <property type="evidence" value="ECO:0007669"/>
    <property type="project" value="UniProtKB-UniRule"/>
</dbReference>
<dbReference type="GO" id="GO:0009295">
    <property type="term" value="C:nucleoid"/>
    <property type="evidence" value="ECO:0007669"/>
    <property type="project" value="UniProtKB-SubCell"/>
</dbReference>
<dbReference type="GO" id="GO:0003700">
    <property type="term" value="F:DNA-binding transcription factor activity"/>
    <property type="evidence" value="ECO:0007669"/>
    <property type="project" value="UniProtKB-UniRule"/>
</dbReference>
<dbReference type="GO" id="GO:0000976">
    <property type="term" value="F:transcription cis-regulatory region binding"/>
    <property type="evidence" value="ECO:0007669"/>
    <property type="project" value="TreeGrafter"/>
</dbReference>
<dbReference type="GO" id="GO:2000143">
    <property type="term" value="P:negative regulation of DNA-templated transcription initiation"/>
    <property type="evidence" value="ECO:0007669"/>
    <property type="project" value="TreeGrafter"/>
</dbReference>
<dbReference type="CDD" id="cd16321">
    <property type="entry name" value="MraZ_C"/>
    <property type="match status" value="1"/>
</dbReference>
<dbReference type="CDD" id="cd16320">
    <property type="entry name" value="MraZ_N"/>
    <property type="match status" value="1"/>
</dbReference>
<dbReference type="Gene3D" id="3.40.1550.20">
    <property type="entry name" value="Transcriptional regulator MraZ domain"/>
    <property type="match status" value="1"/>
</dbReference>
<dbReference type="HAMAP" id="MF_01008">
    <property type="entry name" value="MraZ"/>
    <property type="match status" value="1"/>
</dbReference>
<dbReference type="InterPro" id="IPR003444">
    <property type="entry name" value="MraZ"/>
</dbReference>
<dbReference type="InterPro" id="IPR035644">
    <property type="entry name" value="MraZ_C"/>
</dbReference>
<dbReference type="InterPro" id="IPR020603">
    <property type="entry name" value="MraZ_dom"/>
</dbReference>
<dbReference type="InterPro" id="IPR035642">
    <property type="entry name" value="MraZ_N"/>
</dbReference>
<dbReference type="InterPro" id="IPR038619">
    <property type="entry name" value="MraZ_sf"/>
</dbReference>
<dbReference type="InterPro" id="IPR007159">
    <property type="entry name" value="SpoVT-AbrB_dom"/>
</dbReference>
<dbReference type="InterPro" id="IPR037914">
    <property type="entry name" value="SpoVT-AbrB_sf"/>
</dbReference>
<dbReference type="NCBIfam" id="TIGR00242">
    <property type="entry name" value="division/cell wall cluster transcriptional repressor MraZ"/>
    <property type="match status" value="1"/>
</dbReference>
<dbReference type="PANTHER" id="PTHR34701">
    <property type="entry name" value="TRANSCRIPTIONAL REGULATOR MRAZ"/>
    <property type="match status" value="1"/>
</dbReference>
<dbReference type="PANTHER" id="PTHR34701:SF1">
    <property type="entry name" value="TRANSCRIPTIONAL REGULATOR MRAZ"/>
    <property type="match status" value="1"/>
</dbReference>
<dbReference type="Pfam" id="PF02381">
    <property type="entry name" value="MraZ"/>
    <property type="match status" value="2"/>
</dbReference>
<dbReference type="SUPFAM" id="SSF89447">
    <property type="entry name" value="AbrB/MazE/MraZ-like"/>
    <property type="match status" value="1"/>
</dbReference>
<dbReference type="PROSITE" id="PS51740">
    <property type="entry name" value="SPOVT_ABRB"/>
    <property type="match status" value="2"/>
</dbReference>
<accession>Q31I69</accession>
<comment type="subunit">
    <text evidence="1">Forms oligomers.</text>
</comment>
<comment type="subcellular location">
    <subcellularLocation>
        <location evidence="1">Cytoplasm</location>
        <location evidence="1">Nucleoid</location>
    </subcellularLocation>
</comment>
<comment type="similarity">
    <text evidence="1">Belongs to the MraZ family.</text>
</comment>
<comment type="sequence caution" evidence="3">
    <conflict type="erroneous initiation">
        <sequence resource="EMBL-CDS" id="ABB41154"/>
    </conflict>
</comment>
<name>MRAZ_HYDCU</name>
<evidence type="ECO:0000255" key="1">
    <source>
        <dbReference type="HAMAP-Rule" id="MF_01008"/>
    </source>
</evidence>
<evidence type="ECO:0000255" key="2">
    <source>
        <dbReference type="PROSITE-ProRule" id="PRU01076"/>
    </source>
</evidence>
<evidence type="ECO:0000305" key="3"/>
<protein>
    <recommendedName>
        <fullName>Transcriptional regulator MraZ</fullName>
    </recommendedName>
</protein>